<sequence>MDECVVDAAAVVDALAGKGASAIVLRGLLKESISNAPHLLDAEVGHALRRAVLSDEISEEQARAALDALPYLIDNRYPHSPRLIEYTWQLRHNVTFYDALYVALATALDVPLLTGDSRLAAAPGLPCEIKLVR</sequence>
<protein>
    <recommendedName>
        <fullName evidence="2">Ribonuclease VapC1</fullName>
        <shortName evidence="2">RNase VapC1</shortName>
        <ecNumber evidence="2">3.1.-.-</ecNumber>
    </recommendedName>
    <alternativeName>
        <fullName evidence="2">Toxin VapC1</fullName>
    </alternativeName>
</protein>
<dbReference type="EC" id="3.1.-.-" evidence="2"/>
<dbReference type="EMBL" id="AL123456">
    <property type="protein sequence ID" value="CCP42788.1"/>
    <property type="molecule type" value="Genomic_DNA"/>
</dbReference>
<dbReference type="PIR" id="B70848">
    <property type="entry name" value="B70848"/>
</dbReference>
<dbReference type="RefSeq" id="NP_214579.1">
    <property type="nucleotide sequence ID" value="NC_000962.3"/>
</dbReference>
<dbReference type="RefSeq" id="WP_003400580.1">
    <property type="nucleotide sequence ID" value="NZ_NVQJ01000005.1"/>
</dbReference>
<dbReference type="SMR" id="P9WFC1"/>
<dbReference type="STRING" id="83332.Rv0065"/>
<dbReference type="PaxDb" id="83332-Rv0065"/>
<dbReference type="GeneID" id="886993"/>
<dbReference type="KEGG" id="mtu:Rv0065"/>
<dbReference type="KEGG" id="mtv:RVBD_0065"/>
<dbReference type="TubercuList" id="Rv0065"/>
<dbReference type="eggNOG" id="COG4113">
    <property type="taxonomic scope" value="Bacteria"/>
</dbReference>
<dbReference type="InParanoid" id="P9WFC1"/>
<dbReference type="OrthoDB" id="4377304at2"/>
<dbReference type="PhylomeDB" id="P9WFC1"/>
<dbReference type="Proteomes" id="UP000001584">
    <property type="component" value="Chromosome"/>
</dbReference>
<dbReference type="GO" id="GO:0000287">
    <property type="term" value="F:magnesium ion binding"/>
    <property type="evidence" value="ECO:0007669"/>
    <property type="project" value="UniProtKB-UniRule"/>
</dbReference>
<dbReference type="GO" id="GO:0004540">
    <property type="term" value="F:RNA nuclease activity"/>
    <property type="evidence" value="ECO:0007669"/>
    <property type="project" value="InterPro"/>
</dbReference>
<dbReference type="CDD" id="cd09873">
    <property type="entry name" value="PIN_Pae0151-like"/>
    <property type="match status" value="1"/>
</dbReference>
<dbReference type="Gene3D" id="3.40.50.1010">
    <property type="entry name" value="5'-nuclease"/>
    <property type="match status" value="1"/>
</dbReference>
<dbReference type="HAMAP" id="MF_00265">
    <property type="entry name" value="VapC_Nob1"/>
    <property type="match status" value="1"/>
</dbReference>
<dbReference type="InterPro" id="IPR029060">
    <property type="entry name" value="PIN-like_dom_sf"/>
</dbReference>
<dbReference type="InterPro" id="IPR002716">
    <property type="entry name" value="PIN_dom"/>
</dbReference>
<dbReference type="InterPro" id="IPR044153">
    <property type="entry name" value="PIN_Pae0151-like"/>
</dbReference>
<dbReference type="InterPro" id="IPR051619">
    <property type="entry name" value="TypeII_TA_RNase_PINc/VapC"/>
</dbReference>
<dbReference type="InterPro" id="IPR022907">
    <property type="entry name" value="VapC_family"/>
</dbReference>
<dbReference type="PANTHER" id="PTHR35901:SF1">
    <property type="entry name" value="EXONUCLEASE VAPC9"/>
    <property type="match status" value="1"/>
</dbReference>
<dbReference type="PANTHER" id="PTHR35901">
    <property type="entry name" value="RIBONUCLEASE VAPC3"/>
    <property type="match status" value="1"/>
</dbReference>
<dbReference type="Pfam" id="PF01850">
    <property type="entry name" value="PIN"/>
    <property type="match status" value="1"/>
</dbReference>
<dbReference type="SUPFAM" id="SSF88723">
    <property type="entry name" value="PIN domain-like"/>
    <property type="match status" value="1"/>
</dbReference>
<reference key="1">
    <citation type="journal article" date="1998" name="Nature">
        <title>Deciphering the biology of Mycobacterium tuberculosis from the complete genome sequence.</title>
        <authorList>
            <person name="Cole S.T."/>
            <person name="Brosch R."/>
            <person name="Parkhill J."/>
            <person name="Garnier T."/>
            <person name="Churcher C.M."/>
            <person name="Harris D.E."/>
            <person name="Gordon S.V."/>
            <person name="Eiglmeier K."/>
            <person name="Gas S."/>
            <person name="Barry C.E. III"/>
            <person name="Tekaia F."/>
            <person name="Badcock K."/>
            <person name="Basham D."/>
            <person name="Brown D."/>
            <person name="Chillingworth T."/>
            <person name="Connor R."/>
            <person name="Davies R.M."/>
            <person name="Devlin K."/>
            <person name="Feltwell T."/>
            <person name="Gentles S."/>
            <person name="Hamlin N."/>
            <person name="Holroyd S."/>
            <person name="Hornsby T."/>
            <person name="Jagels K."/>
            <person name="Krogh A."/>
            <person name="McLean J."/>
            <person name="Moule S."/>
            <person name="Murphy L.D."/>
            <person name="Oliver S."/>
            <person name="Osborne J."/>
            <person name="Quail M.A."/>
            <person name="Rajandream M.A."/>
            <person name="Rogers J."/>
            <person name="Rutter S."/>
            <person name="Seeger K."/>
            <person name="Skelton S."/>
            <person name="Squares S."/>
            <person name="Squares R."/>
            <person name="Sulston J.E."/>
            <person name="Taylor K."/>
            <person name="Whitehead S."/>
            <person name="Barrell B.G."/>
        </authorList>
    </citation>
    <scope>NUCLEOTIDE SEQUENCE [LARGE SCALE GENOMIC DNA]</scope>
    <source>
        <strain>ATCC 25618 / H37Rv</strain>
    </source>
</reference>
<reference key="2">
    <citation type="journal article" date="2005" name="Nucleic Acids Res.">
        <title>Toxin-antitoxin loci are highly abundant in free-living but lost from host-associated prokaryotes.</title>
        <authorList>
            <person name="Pandey D.P."/>
            <person name="Gerdes K."/>
        </authorList>
    </citation>
    <scope>POSSIBLE FUNCTION</scope>
    <source>
        <strain>ATCC 25618 / H37Rv</strain>
    </source>
</reference>
<reference key="3">
    <citation type="journal article" date="2012" name="RNA">
        <title>Determination of ribonuclease sequence-specificity using Pentaprobes and mass spectrometry.</title>
        <authorList>
            <person name="McKenzie J.L."/>
            <person name="Duyvestyn J.M."/>
            <person name="Smith T."/>
            <person name="Bendak K."/>
            <person name="Mackay J."/>
            <person name="Cursons R."/>
            <person name="Cook G.M."/>
            <person name="Arcus V.L."/>
        </authorList>
    </citation>
    <scope>FUNCTION</scope>
    <scope>ACTIVITY REGULATION</scope>
    <scope>COFACTOR</scope>
</reference>
<evidence type="ECO:0000250" key="1"/>
<evidence type="ECO:0000255" key="2">
    <source>
        <dbReference type="HAMAP-Rule" id="MF_00265"/>
    </source>
</evidence>
<evidence type="ECO:0000269" key="3">
    <source>
    </source>
</evidence>
<comment type="function">
    <text evidence="1 3">Toxic component of a type II toxin-antitoxin (TA) system. The cognate antitoxin is VapB1 (By similarity). Has ribonuclease activity.</text>
</comment>
<comment type="cofactor">
    <cofactor evidence="2 3">
        <name>Mg(2+)</name>
        <dbReference type="ChEBI" id="CHEBI:18420"/>
    </cofactor>
</comment>
<comment type="activity regulation">
    <text evidence="3">Inhibited by EDTA.</text>
</comment>
<comment type="similarity">
    <text evidence="2">Belongs to the PINc/VapC protein family.</text>
</comment>
<name>VAPC1_MYCTU</name>
<keyword id="KW-0378">Hydrolase</keyword>
<keyword id="KW-0460">Magnesium</keyword>
<keyword id="KW-0479">Metal-binding</keyword>
<keyword id="KW-0540">Nuclease</keyword>
<keyword id="KW-1185">Reference proteome</keyword>
<keyword id="KW-1277">Toxin-antitoxin system</keyword>
<organism>
    <name type="scientific">Mycobacterium tuberculosis (strain ATCC 25618 / H37Rv)</name>
    <dbReference type="NCBI Taxonomy" id="83332"/>
    <lineage>
        <taxon>Bacteria</taxon>
        <taxon>Bacillati</taxon>
        <taxon>Actinomycetota</taxon>
        <taxon>Actinomycetes</taxon>
        <taxon>Mycobacteriales</taxon>
        <taxon>Mycobacteriaceae</taxon>
        <taxon>Mycobacterium</taxon>
        <taxon>Mycobacterium tuberculosis complex</taxon>
    </lineage>
</organism>
<gene>
    <name evidence="2" type="primary">vapC1</name>
    <name type="ordered locus">Rv0065</name>
</gene>
<accession>P9WFC1</accession>
<accession>L0T478</accession>
<accession>O53610</accession>
<accession>Q7DAI7</accession>
<feature type="chain" id="PRO_0000407864" description="Ribonuclease VapC1">
    <location>
        <begin position="1"/>
        <end position="133"/>
    </location>
</feature>
<feature type="binding site" evidence="2">
    <location>
        <position position="7"/>
    </location>
    <ligand>
        <name>Mg(2+)</name>
        <dbReference type="ChEBI" id="CHEBI:18420"/>
    </ligand>
</feature>
<feature type="binding site" evidence="2">
    <location>
        <position position="98"/>
    </location>
    <ligand>
        <name>Mg(2+)</name>
        <dbReference type="ChEBI" id="CHEBI:18420"/>
    </ligand>
</feature>
<proteinExistence type="inferred from homology"/>